<organism>
    <name type="scientific">Nocardioides sp. (strain ATCC BAA-499 / JS614)</name>
    <dbReference type="NCBI Taxonomy" id="196162"/>
    <lineage>
        <taxon>Bacteria</taxon>
        <taxon>Bacillati</taxon>
        <taxon>Actinomycetota</taxon>
        <taxon>Actinomycetes</taxon>
        <taxon>Propionibacteriales</taxon>
        <taxon>Nocardioidaceae</taxon>
        <taxon>Nocardioides</taxon>
    </lineage>
</organism>
<keyword id="KW-0255">Endonuclease</keyword>
<keyword id="KW-0378">Hydrolase</keyword>
<keyword id="KW-0540">Nuclease</keyword>
<keyword id="KW-1185">Reference proteome</keyword>
<keyword id="KW-0694">RNA-binding</keyword>
<keyword id="KW-0819">tRNA processing</keyword>
<evidence type="ECO:0000255" key="1">
    <source>
        <dbReference type="HAMAP-Rule" id="MF_00227"/>
    </source>
</evidence>
<name>RNPA_NOCSJ</name>
<proteinExistence type="inferred from homology"/>
<accession>A1SQV9</accession>
<dbReference type="EC" id="3.1.26.5" evidence="1"/>
<dbReference type="EMBL" id="CP000509">
    <property type="protein sequence ID" value="ABL84194.1"/>
    <property type="molecule type" value="Genomic_DNA"/>
</dbReference>
<dbReference type="RefSeq" id="WP_011758122.1">
    <property type="nucleotide sequence ID" value="NC_008699.1"/>
</dbReference>
<dbReference type="SMR" id="A1SQV9"/>
<dbReference type="STRING" id="196162.Noca_4699"/>
<dbReference type="KEGG" id="nca:Noca_4699"/>
<dbReference type="eggNOG" id="COG0594">
    <property type="taxonomic scope" value="Bacteria"/>
</dbReference>
<dbReference type="HOGENOM" id="CLU_117179_4_1_11"/>
<dbReference type="OrthoDB" id="196964at2"/>
<dbReference type="Proteomes" id="UP000000640">
    <property type="component" value="Chromosome"/>
</dbReference>
<dbReference type="GO" id="GO:0030677">
    <property type="term" value="C:ribonuclease P complex"/>
    <property type="evidence" value="ECO:0007669"/>
    <property type="project" value="TreeGrafter"/>
</dbReference>
<dbReference type="GO" id="GO:0042781">
    <property type="term" value="F:3'-tRNA processing endoribonuclease activity"/>
    <property type="evidence" value="ECO:0007669"/>
    <property type="project" value="TreeGrafter"/>
</dbReference>
<dbReference type="GO" id="GO:0004526">
    <property type="term" value="F:ribonuclease P activity"/>
    <property type="evidence" value="ECO:0007669"/>
    <property type="project" value="UniProtKB-UniRule"/>
</dbReference>
<dbReference type="GO" id="GO:0000049">
    <property type="term" value="F:tRNA binding"/>
    <property type="evidence" value="ECO:0007669"/>
    <property type="project" value="UniProtKB-UniRule"/>
</dbReference>
<dbReference type="GO" id="GO:0001682">
    <property type="term" value="P:tRNA 5'-leader removal"/>
    <property type="evidence" value="ECO:0007669"/>
    <property type="project" value="UniProtKB-UniRule"/>
</dbReference>
<dbReference type="Gene3D" id="3.30.230.10">
    <property type="match status" value="1"/>
</dbReference>
<dbReference type="HAMAP" id="MF_00227">
    <property type="entry name" value="RNase_P"/>
    <property type="match status" value="1"/>
</dbReference>
<dbReference type="InterPro" id="IPR020568">
    <property type="entry name" value="Ribosomal_Su5_D2-typ_SF"/>
</dbReference>
<dbReference type="InterPro" id="IPR014721">
    <property type="entry name" value="Ribsml_uS5_D2-typ_fold_subgr"/>
</dbReference>
<dbReference type="InterPro" id="IPR000100">
    <property type="entry name" value="RNase_P"/>
</dbReference>
<dbReference type="InterPro" id="IPR020539">
    <property type="entry name" value="RNase_P_CS"/>
</dbReference>
<dbReference type="NCBIfam" id="TIGR00188">
    <property type="entry name" value="rnpA"/>
    <property type="match status" value="1"/>
</dbReference>
<dbReference type="PANTHER" id="PTHR33992">
    <property type="entry name" value="RIBONUCLEASE P PROTEIN COMPONENT"/>
    <property type="match status" value="1"/>
</dbReference>
<dbReference type="PANTHER" id="PTHR33992:SF1">
    <property type="entry name" value="RIBONUCLEASE P PROTEIN COMPONENT"/>
    <property type="match status" value="1"/>
</dbReference>
<dbReference type="Pfam" id="PF00825">
    <property type="entry name" value="Ribonuclease_P"/>
    <property type="match status" value="1"/>
</dbReference>
<dbReference type="SUPFAM" id="SSF54211">
    <property type="entry name" value="Ribosomal protein S5 domain 2-like"/>
    <property type="match status" value="1"/>
</dbReference>
<dbReference type="PROSITE" id="PS00648">
    <property type="entry name" value="RIBONUCLEASE_P"/>
    <property type="match status" value="1"/>
</dbReference>
<feature type="chain" id="PRO_1000021439" description="Ribonuclease P protein component">
    <location>
        <begin position="1"/>
        <end position="117"/>
    </location>
</feature>
<comment type="function">
    <text evidence="1">RNaseP catalyzes the removal of the 5'-leader sequence from pre-tRNA to produce the mature 5'-terminus. It can also cleave other RNA substrates such as 4.5S RNA. The protein component plays an auxiliary but essential role in vivo by binding to the 5'-leader sequence and broadening the substrate specificity of the ribozyme.</text>
</comment>
<comment type="catalytic activity">
    <reaction evidence="1">
        <text>Endonucleolytic cleavage of RNA, removing 5'-extranucleotides from tRNA precursor.</text>
        <dbReference type="EC" id="3.1.26.5"/>
    </reaction>
</comment>
<comment type="subunit">
    <text evidence="1">Consists of a catalytic RNA component (M1 or rnpB) and a protein subunit.</text>
</comment>
<comment type="similarity">
    <text evidence="1">Belongs to the RnpA family.</text>
</comment>
<protein>
    <recommendedName>
        <fullName evidence="1">Ribonuclease P protein component</fullName>
        <shortName evidence="1">RNase P protein</shortName>
        <shortName evidence="1">RNaseP protein</shortName>
        <ecNumber evidence="1">3.1.26.5</ecNumber>
    </recommendedName>
    <alternativeName>
        <fullName evidence="1">Protein C5</fullName>
    </alternativeName>
</protein>
<gene>
    <name evidence="1" type="primary">rnpA</name>
    <name type="ordered locus">Noca_4699</name>
</gene>
<reference key="1">
    <citation type="submission" date="2006-12" db="EMBL/GenBank/DDBJ databases">
        <title>Complete sequence of chromosome 1 of Nocardioides sp. JS614.</title>
        <authorList>
            <person name="Copeland A."/>
            <person name="Lucas S."/>
            <person name="Lapidus A."/>
            <person name="Barry K."/>
            <person name="Detter J.C."/>
            <person name="Glavina del Rio T."/>
            <person name="Hammon N."/>
            <person name="Israni S."/>
            <person name="Dalin E."/>
            <person name="Tice H."/>
            <person name="Pitluck S."/>
            <person name="Thompson L.S."/>
            <person name="Brettin T."/>
            <person name="Bruce D."/>
            <person name="Han C."/>
            <person name="Tapia R."/>
            <person name="Schmutz J."/>
            <person name="Larimer F."/>
            <person name="Land M."/>
            <person name="Hauser L."/>
            <person name="Kyrpides N."/>
            <person name="Kim E."/>
            <person name="Mattes T."/>
            <person name="Gossett J."/>
            <person name="Richardson P."/>
        </authorList>
    </citation>
    <scope>NUCLEOTIDE SEQUENCE [LARGE SCALE GENOMIC DNA]</scope>
    <source>
        <strain>ATCC BAA-499 / JS614</strain>
    </source>
</reference>
<sequence>MLSAAHRLRDGATFREAIRRGRRAGRQTLVVHLLVGEPVASQPARVGFVVSRAVGNAVIRNQVKRRLRHLAREHVSSLPGSAVLVVRALPPAANASAAELARDLERCLLRVGAEVTG</sequence>